<dbReference type="EC" id="4.1.1.11" evidence="1"/>
<dbReference type="EMBL" id="CP000141">
    <property type="protein sequence ID" value="ABB13868.1"/>
    <property type="molecule type" value="Genomic_DNA"/>
</dbReference>
<dbReference type="RefSeq" id="WP_011345245.1">
    <property type="nucleotide sequence ID" value="NC_007503.1"/>
</dbReference>
<dbReference type="SMR" id="Q3A9L2"/>
<dbReference type="FunCoup" id="Q3A9L2">
    <property type="interactions" value="192"/>
</dbReference>
<dbReference type="STRING" id="246194.CHY_2375"/>
<dbReference type="KEGG" id="chy:CHY_2375"/>
<dbReference type="eggNOG" id="COG0853">
    <property type="taxonomic scope" value="Bacteria"/>
</dbReference>
<dbReference type="HOGENOM" id="CLU_115305_2_0_9"/>
<dbReference type="InParanoid" id="Q3A9L2"/>
<dbReference type="OrthoDB" id="9803983at2"/>
<dbReference type="UniPathway" id="UPA00028">
    <property type="reaction ID" value="UER00002"/>
</dbReference>
<dbReference type="Proteomes" id="UP000002706">
    <property type="component" value="Chromosome"/>
</dbReference>
<dbReference type="GO" id="GO:0005829">
    <property type="term" value="C:cytosol"/>
    <property type="evidence" value="ECO:0007669"/>
    <property type="project" value="TreeGrafter"/>
</dbReference>
<dbReference type="GO" id="GO:0004068">
    <property type="term" value="F:aspartate 1-decarboxylase activity"/>
    <property type="evidence" value="ECO:0007669"/>
    <property type="project" value="UniProtKB-UniRule"/>
</dbReference>
<dbReference type="GO" id="GO:0006523">
    <property type="term" value="P:alanine biosynthetic process"/>
    <property type="evidence" value="ECO:0007669"/>
    <property type="project" value="InterPro"/>
</dbReference>
<dbReference type="GO" id="GO:0015940">
    <property type="term" value="P:pantothenate biosynthetic process"/>
    <property type="evidence" value="ECO:0007669"/>
    <property type="project" value="UniProtKB-UniRule"/>
</dbReference>
<dbReference type="CDD" id="cd06919">
    <property type="entry name" value="Asp_decarbox"/>
    <property type="match status" value="1"/>
</dbReference>
<dbReference type="Gene3D" id="2.40.40.20">
    <property type="match status" value="1"/>
</dbReference>
<dbReference type="HAMAP" id="MF_00446">
    <property type="entry name" value="PanD"/>
    <property type="match status" value="1"/>
</dbReference>
<dbReference type="InterPro" id="IPR009010">
    <property type="entry name" value="Asp_de-COase-like_dom_sf"/>
</dbReference>
<dbReference type="InterPro" id="IPR003190">
    <property type="entry name" value="Asp_decarbox"/>
</dbReference>
<dbReference type="NCBIfam" id="TIGR00223">
    <property type="entry name" value="panD"/>
    <property type="match status" value="1"/>
</dbReference>
<dbReference type="PANTHER" id="PTHR21012">
    <property type="entry name" value="ASPARTATE 1-DECARBOXYLASE"/>
    <property type="match status" value="1"/>
</dbReference>
<dbReference type="PANTHER" id="PTHR21012:SF0">
    <property type="entry name" value="ASPARTATE 1-DECARBOXYLASE"/>
    <property type="match status" value="1"/>
</dbReference>
<dbReference type="Pfam" id="PF02261">
    <property type="entry name" value="Asp_decarbox"/>
    <property type="match status" value="1"/>
</dbReference>
<dbReference type="PIRSF" id="PIRSF006246">
    <property type="entry name" value="Asp_decarbox"/>
    <property type="match status" value="1"/>
</dbReference>
<dbReference type="SUPFAM" id="SSF50692">
    <property type="entry name" value="ADC-like"/>
    <property type="match status" value="1"/>
</dbReference>
<evidence type="ECO:0000255" key="1">
    <source>
        <dbReference type="HAMAP-Rule" id="MF_00446"/>
    </source>
</evidence>
<feature type="chain" id="PRO_0000236859" description="Aspartate 1-decarboxylase beta chain" evidence="1">
    <location>
        <begin position="1"/>
        <end position="24"/>
    </location>
</feature>
<feature type="chain" id="PRO_0000236860" description="Aspartate 1-decarboxylase alpha chain" evidence="1">
    <location>
        <begin position="25"/>
        <end position="127"/>
    </location>
</feature>
<feature type="active site" description="Schiff-base intermediate with substrate; via pyruvic acid" evidence="1">
    <location>
        <position position="25"/>
    </location>
</feature>
<feature type="active site" description="Proton donor" evidence="1">
    <location>
        <position position="58"/>
    </location>
</feature>
<feature type="binding site" evidence="1">
    <location>
        <position position="57"/>
    </location>
    <ligand>
        <name>substrate</name>
    </ligand>
</feature>
<feature type="binding site" evidence="1">
    <location>
        <begin position="73"/>
        <end position="75"/>
    </location>
    <ligand>
        <name>substrate</name>
    </ligand>
</feature>
<feature type="modified residue" description="Pyruvic acid (Ser)" evidence="1">
    <location>
        <position position="25"/>
    </location>
</feature>
<proteinExistence type="inferred from homology"/>
<reference key="1">
    <citation type="journal article" date="2005" name="PLoS Genet.">
        <title>Life in hot carbon monoxide: the complete genome sequence of Carboxydothermus hydrogenoformans Z-2901.</title>
        <authorList>
            <person name="Wu M."/>
            <person name="Ren Q."/>
            <person name="Durkin A.S."/>
            <person name="Daugherty S.C."/>
            <person name="Brinkac L.M."/>
            <person name="Dodson R.J."/>
            <person name="Madupu R."/>
            <person name="Sullivan S.A."/>
            <person name="Kolonay J.F."/>
            <person name="Nelson W.C."/>
            <person name="Tallon L.J."/>
            <person name="Jones K.M."/>
            <person name="Ulrich L.E."/>
            <person name="Gonzalez J.M."/>
            <person name="Zhulin I.B."/>
            <person name="Robb F.T."/>
            <person name="Eisen J.A."/>
        </authorList>
    </citation>
    <scope>NUCLEOTIDE SEQUENCE [LARGE SCALE GENOMIC DNA]</scope>
    <source>
        <strain>ATCC BAA-161 / DSM 6008 / Z-2901</strain>
    </source>
</reference>
<sequence length="127" mass="14084">MFLTMMKGKIHRATVTEANLNYVGSITIDEELLDASGILPNEKVQVVNINNGARLETYTIPGPRGSGIISLNGAAARLCQIGDKVIIIAYALMEEKEAKQWQPKVVFVDEYNKIVKIKEKEIHGQTE</sequence>
<protein>
    <recommendedName>
        <fullName evidence="1">Aspartate 1-decarboxylase</fullName>
        <ecNumber evidence="1">4.1.1.11</ecNumber>
    </recommendedName>
    <alternativeName>
        <fullName evidence="1">Aspartate alpha-decarboxylase</fullName>
    </alternativeName>
    <component>
        <recommendedName>
            <fullName evidence="1">Aspartate 1-decarboxylase beta chain</fullName>
        </recommendedName>
    </component>
    <component>
        <recommendedName>
            <fullName evidence="1">Aspartate 1-decarboxylase alpha chain</fullName>
        </recommendedName>
    </component>
</protein>
<name>PAND_CARHZ</name>
<keyword id="KW-0068">Autocatalytic cleavage</keyword>
<keyword id="KW-0963">Cytoplasm</keyword>
<keyword id="KW-0210">Decarboxylase</keyword>
<keyword id="KW-0456">Lyase</keyword>
<keyword id="KW-0566">Pantothenate biosynthesis</keyword>
<keyword id="KW-0670">Pyruvate</keyword>
<keyword id="KW-1185">Reference proteome</keyword>
<keyword id="KW-0704">Schiff base</keyword>
<keyword id="KW-0865">Zymogen</keyword>
<gene>
    <name evidence="1" type="primary">panD</name>
    <name type="ordered locus">CHY_2375</name>
</gene>
<accession>Q3A9L2</accession>
<comment type="function">
    <text evidence="1">Catalyzes the pyruvoyl-dependent decarboxylation of aspartate to produce beta-alanine.</text>
</comment>
<comment type="catalytic activity">
    <reaction evidence="1">
        <text>L-aspartate + H(+) = beta-alanine + CO2</text>
        <dbReference type="Rhea" id="RHEA:19497"/>
        <dbReference type="ChEBI" id="CHEBI:15378"/>
        <dbReference type="ChEBI" id="CHEBI:16526"/>
        <dbReference type="ChEBI" id="CHEBI:29991"/>
        <dbReference type="ChEBI" id="CHEBI:57966"/>
        <dbReference type="EC" id="4.1.1.11"/>
    </reaction>
</comment>
<comment type="cofactor">
    <cofactor evidence="1">
        <name>pyruvate</name>
        <dbReference type="ChEBI" id="CHEBI:15361"/>
    </cofactor>
    <text evidence="1">Binds 1 pyruvoyl group covalently per subunit.</text>
</comment>
<comment type="pathway">
    <text evidence="1">Cofactor biosynthesis; (R)-pantothenate biosynthesis; beta-alanine from L-aspartate: step 1/1.</text>
</comment>
<comment type="subunit">
    <text evidence="1">Heterooctamer of four alpha and four beta subunits.</text>
</comment>
<comment type="subcellular location">
    <subcellularLocation>
        <location evidence="1">Cytoplasm</location>
    </subcellularLocation>
</comment>
<comment type="PTM">
    <text evidence="1">Is synthesized initially as an inactive proenzyme, which is activated by self-cleavage at a specific serine bond to produce a beta-subunit with a hydroxyl group at its C-terminus and an alpha-subunit with a pyruvoyl group at its N-terminus.</text>
</comment>
<comment type="similarity">
    <text evidence="1">Belongs to the PanD family.</text>
</comment>
<organism>
    <name type="scientific">Carboxydothermus hydrogenoformans (strain ATCC BAA-161 / DSM 6008 / Z-2901)</name>
    <dbReference type="NCBI Taxonomy" id="246194"/>
    <lineage>
        <taxon>Bacteria</taxon>
        <taxon>Bacillati</taxon>
        <taxon>Bacillota</taxon>
        <taxon>Clostridia</taxon>
        <taxon>Thermoanaerobacterales</taxon>
        <taxon>Thermoanaerobacteraceae</taxon>
        <taxon>Carboxydothermus</taxon>
    </lineage>
</organism>